<gene>
    <name evidence="1" type="primary">lpxC</name>
    <name type="ordered locus">PsycPRwf_0530</name>
</gene>
<proteinExistence type="inferred from homology"/>
<comment type="function">
    <text evidence="1">Catalyzes the hydrolysis of UDP-3-O-myristoyl-N-acetylglucosamine to form UDP-3-O-myristoylglucosamine and acetate, the committed step in lipid A biosynthesis.</text>
</comment>
<comment type="catalytic activity">
    <reaction evidence="1">
        <text>a UDP-3-O-[(3R)-3-hydroxyacyl]-N-acetyl-alpha-D-glucosamine + H2O = a UDP-3-O-[(3R)-3-hydroxyacyl]-alpha-D-glucosamine + acetate</text>
        <dbReference type="Rhea" id="RHEA:67816"/>
        <dbReference type="ChEBI" id="CHEBI:15377"/>
        <dbReference type="ChEBI" id="CHEBI:30089"/>
        <dbReference type="ChEBI" id="CHEBI:137740"/>
        <dbReference type="ChEBI" id="CHEBI:173225"/>
        <dbReference type="EC" id="3.5.1.108"/>
    </reaction>
</comment>
<comment type="cofactor">
    <cofactor evidence="1">
        <name>Zn(2+)</name>
        <dbReference type="ChEBI" id="CHEBI:29105"/>
    </cofactor>
</comment>
<comment type="pathway">
    <text evidence="1">Glycolipid biosynthesis; lipid IV(A) biosynthesis; lipid IV(A) from (3R)-3-hydroxytetradecanoyl-[acyl-carrier-protein] and UDP-N-acetyl-alpha-D-glucosamine: step 2/6.</text>
</comment>
<comment type="similarity">
    <text evidence="1">Belongs to the LpxC family.</text>
</comment>
<reference key="1">
    <citation type="submission" date="2007-05" db="EMBL/GenBank/DDBJ databases">
        <title>Complete sequence of chromosome of Psychrobacter sp. PRwf-1.</title>
        <authorList>
            <consortium name="US DOE Joint Genome Institute"/>
            <person name="Copeland A."/>
            <person name="Lucas S."/>
            <person name="Lapidus A."/>
            <person name="Barry K."/>
            <person name="Detter J.C."/>
            <person name="Glavina del Rio T."/>
            <person name="Hammon N."/>
            <person name="Israni S."/>
            <person name="Dalin E."/>
            <person name="Tice H."/>
            <person name="Pitluck S."/>
            <person name="Chain P."/>
            <person name="Malfatti S."/>
            <person name="Shin M."/>
            <person name="Vergez L."/>
            <person name="Schmutz J."/>
            <person name="Larimer F."/>
            <person name="Land M."/>
            <person name="Hauser L."/>
            <person name="Kyrpides N."/>
            <person name="Kim E."/>
            <person name="Tiedje J."/>
            <person name="Richardson P."/>
        </authorList>
    </citation>
    <scope>NUCLEOTIDE SEQUENCE [LARGE SCALE GENOMIC DNA]</scope>
    <source>
        <strain>PRwf-1</strain>
    </source>
</reference>
<dbReference type="EC" id="3.5.1.108" evidence="1"/>
<dbReference type="EMBL" id="CP000713">
    <property type="protein sequence ID" value="ABQ93485.1"/>
    <property type="molecule type" value="Genomic_DNA"/>
</dbReference>
<dbReference type="SMR" id="A5WCU4"/>
<dbReference type="STRING" id="349106.PsycPRwf_0530"/>
<dbReference type="KEGG" id="prw:PsycPRwf_0530"/>
<dbReference type="eggNOG" id="COG0774">
    <property type="taxonomic scope" value="Bacteria"/>
</dbReference>
<dbReference type="HOGENOM" id="CLU_046528_1_0_6"/>
<dbReference type="UniPathway" id="UPA00359">
    <property type="reaction ID" value="UER00478"/>
</dbReference>
<dbReference type="GO" id="GO:0016020">
    <property type="term" value="C:membrane"/>
    <property type="evidence" value="ECO:0007669"/>
    <property type="project" value="GOC"/>
</dbReference>
<dbReference type="GO" id="GO:0046872">
    <property type="term" value="F:metal ion binding"/>
    <property type="evidence" value="ECO:0007669"/>
    <property type="project" value="UniProtKB-KW"/>
</dbReference>
<dbReference type="GO" id="GO:0103117">
    <property type="term" value="F:UDP-3-O-acyl-N-acetylglucosamine deacetylase activity"/>
    <property type="evidence" value="ECO:0007669"/>
    <property type="project" value="UniProtKB-UniRule"/>
</dbReference>
<dbReference type="GO" id="GO:0009245">
    <property type="term" value="P:lipid A biosynthetic process"/>
    <property type="evidence" value="ECO:0007669"/>
    <property type="project" value="UniProtKB-UniRule"/>
</dbReference>
<dbReference type="Gene3D" id="3.30.230.20">
    <property type="entry name" value="lpxc deacetylase, domain 1"/>
    <property type="match status" value="1"/>
</dbReference>
<dbReference type="Gene3D" id="3.30.1700.10">
    <property type="entry name" value="lpxc deacetylase, domain 2"/>
    <property type="match status" value="1"/>
</dbReference>
<dbReference type="HAMAP" id="MF_00388">
    <property type="entry name" value="LpxC"/>
    <property type="match status" value="1"/>
</dbReference>
<dbReference type="InterPro" id="IPR020568">
    <property type="entry name" value="Ribosomal_Su5_D2-typ_SF"/>
</dbReference>
<dbReference type="InterPro" id="IPR004463">
    <property type="entry name" value="UDP-acyl_GlcNac_deAcase"/>
</dbReference>
<dbReference type="InterPro" id="IPR011334">
    <property type="entry name" value="UDP-acyl_GlcNac_deAcase_C"/>
</dbReference>
<dbReference type="InterPro" id="IPR015870">
    <property type="entry name" value="UDP-acyl_N-AcGlcN_deAcase_N"/>
</dbReference>
<dbReference type="NCBIfam" id="TIGR00325">
    <property type="entry name" value="lpxC"/>
    <property type="match status" value="1"/>
</dbReference>
<dbReference type="PANTHER" id="PTHR33694">
    <property type="entry name" value="UDP-3-O-ACYL-N-ACETYLGLUCOSAMINE DEACETYLASE 1, MITOCHONDRIAL-RELATED"/>
    <property type="match status" value="1"/>
</dbReference>
<dbReference type="PANTHER" id="PTHR33694:SF1">
    <property type="entry name" value="UDP-3-O-ACYL-N-ACETYLGLUCOSAMINE DEACETYLASE 1, MITOCHONDRIAL-RELATED"/>
    <property type="match status" value="1"/>
</dbReference>
<dbReference type="Pfam" id="PF03331">
    <property type="entry name" value="LpxC"/>
    <property type="match status" value="1"/>
</dbReference>
<dbReference type="SUPFAM" id="SSF54211">
    <property type="entry name" value="Ribosomal protein S5 domain 2-like"/>
    <property type="match status" value="2"/>
</dbReference>
<feature type="chain" id="PRO_1000072211" description="UDP-3-O-acyl-N-acetylglucosamine deacetylase">
    <location>
        <begin position="1"/>
        <end position="297"/>
    </location>
</feature>
<feature type="active site" description="Proton donor" evidence="1">
    <location>
        <position position="263"/>
    </location>
</feature>
<feature type="binding site" evidence="1">
    <location>
        <position position="77"/>
    </location>
    <ligand>
        <name>Zn(2+)</name>
        <dbReference type="ChEBI" id="CHEBI:29105"/>
    </ligand>
</feature>
<feature type="binding site" evidence="1">
    <location>
        <position position="236"/>
    </location>
    <ligand>
        <name>Zn(2+)</name>
        <dbReference type="ChEBI" id="CHEBI:29105"/>
    </ligand>
</feature>
<feature type="binding site" evidence="1">
    <location>
        <position position="240"/>
    </location>
    <ligand>
        <name>Zn(2+)</name>
        <dbReference type="ChEBI" id="CHEBI:29105"/>
    </ligand>
</feature>
<sequence>MKQRTLKQPITVVGIGLHSGQDVTLTLQPSEVNTGIRFLRTDIEDAPLIAADAFLVTDTVMSSNLMVNGIKIGTVEHLLSALAGFGIDNLLIKVSDAEIPIMDGSAANYVTLLLEAGIEEQAAPKQFMKILKPVKVVEGDKWAQLEPYDGFSLDFEIDFNHPGIPKDTQRYRFEFSLHNYIENVGNARTFGFMRDIEHLQKNNLALGGSLDNAIVLDDNGIMNKEGLRHQEEFVRHKILDAIGDLYLAKYSLIGGFSAYKSGHALNNKLIREVYNDPNNFEIVTIYDTSSVARAYEI</sequence>
<accession>A5WCU4</accession>
<protein>
    <recommendedName>
        <fullName evidence="1">UDP-3-O-acyl-N-acetylglucosamine deacetylase</fullName>
        <shortName evidence="1">UDP-3-O-acyl-GlcNAc deacetylase</shortName>
        <ecNumber evidence="1">3.5.1.108</ecNumber>
    </recommendedName>
    <alternativeName>
        <fullName evidence="1">UDP-3-O-[R-3-hydroxymyristoyl]-N-acetylglucosamine deacetylase</fullName>
    </alternativeName>
</protein>
<keyword id="KW-0378">Hydrolase</keyword>
<keyword id="KW-0441">Lipid A biosynthesis</keyword>
<keyword id="KW-0444">Lipid biosynthesis</keyword>
<keyword id="KW-0443">Lipid metabolism</keyword>
<keyword id="KW-0479">Metal-binding</keyword>
<keyword id="KW-0862">Zinc</keyword>
<evidence type="ECO:0000255" key="1">
    <source>
        <dbReference type="HAMAP-Rule" id="MF_00388"/>
    </source>
</evidence>
<organism>
    <name type="scientific">Psychrobacter sp. (strain PRwf-1)</name>
    <dbReference type="NCBI Taxonomy" id="349106"/>
    <lineage>
        <taxon>Bacteria</taxon>
        <taxon>Pseudomonadati</taxon>
        <taxon>Pseudomonadota</taxon>
        <taxon>Gammaproteobacteria</taxon>
        <taxon>Moraxellales</taxon>
        <taxon>Moraxellaceae</taxon>
        <taxon>Psychrobacter</taxon>
    </lineage>
</organism>
<name>LPXC_PSYWF</name>